<dbReference type="EC" id="5.1.1.1" evidence="1"/>
<dbReference type="EMBL" id="CP000058">
    <property type="protein sequence ID" value="AAZ36688.1"/>
    <property type="molecule type" value="Genomic_DNA"/>
</dbReference>
<dbReference type="RefSeq" id="WP_011167394.1">
    <property type="nucleotide sequence ID" value="NC_005773.3"/>
</dbReference>
<dbReference type="SMR" id="Q48PY9"/>
<dbReference type="KEGG" id="psp:PSPPH_0225"/>
<dbReference type="eggNOG" id="COG0787">
    <property type="taxonomic scope" value="Bacteria"/>
</dbReference>
<dbReference type="HOGENOM" id="CLU_028393_1_0_6"/>
<dbReference type="UniPathway" id="UPA00042">
    <property type="reaction ID" value="UER00497"/>
</dbReference>
<dbReference type="Proteomes" id="UP000000551">
    <property type="component" value="Chromosome"/>
</dbReference>
<dbReference type="GO" id="GO:0005829">
    <property type="term" value="C:cytosol"/>
    <property type="evidence" value="ECO:0007669"/>
    <property type="project" value="TreeGrafter"/>
</dbReference>
<dbReference type="GO" id="GO:0008784">
    <property type="term" value="F:alanine racemase activity"/>
    <property type="evidence" value="ECO:0007669"/>
    <property type="project" value="UniProtKB-UniRule"/>
</dbReference>
<dbReference type="GO" id="GO:0030170">
    <property type="term" value="F:pyridoxal phosphate binding"/>
    <property type="evidence" value="ECO:0007669"/>
    <property type="project" value="UniProtKB-UniRule"/>
</dbReference>
<dbReference type="GO" id="GO:0030632">
    <property type="term" value="P:D-alanine biosynthetic process"/>
    <property type="evidence" value="ECO:0007669"/>
    <property type="project" value="UniProtKB-UniRule"/>
</dbReference>
<dbReference type="CDD" id="cd06827">
    <property type="entry name" value="PLPDE_III_AR_proteobact"/>
    <property type="match status" value="1"/>
</dbReference>
<dbReference type="FunFam" id="3.20.20.10:FF:000002">
    <property type="entry name" value="Alanine racemase"/>
    <property type="match status" value="1"/>
</dbReference>
<dbReference type="Gene3D" id="3.20.20.10">
    <property type="entry name" value="Alanine racemase"/>
    <property type="match status" value="1"/>
</dbReference>
<dbReference type="Gene3D" id="2.40.37.10">
    <property type="entry name" value="Lyase, Ornithine Decarboxylase, Chain A, domain 1"/>
    <property type="match status" value="1"/>
</dbReference>
<dbReference type="HAMAP" id="MF_01201">
    <property type="entry name" value="Ala_racemase"/>
    <property type="match status" value="1"/>
</dbReference>
<dbReference type="InterPro" id="IPR000821">
    <property type="entry name" value="Ala_racemase"/>
</dbReference>
<dbReference type="InterPro" id="IPR009006">
    <property type="entry name" value="Ala_racemase/Decarboxylase_C"/>
</dbReference>
<dbReference type="InterPro" id="IPR011079">
    <property type="entry name" value="Ala_racemase_C"/>
</dbReference>
<dbReference type="InterPro" id="IPR001608">
    <property type="entry name" value="Ala_racemase_N"/>
</dbReference>
<dbReference type="InterPro" id="IPR020622">
    <property type="entry name" value="Ala_racemase_pyridoxalP-BS"/>
</dbReference>
<dbReference type="InterPro" id="IPR029066">
    <property type="entry name" value="PLP-binding_barrel"/>
</dbReference>
<dbReference type="NCBIfam" id="TIGR00492">
    <property type="entry name" value="alr"/>
    <property type="match status" value="1"/>
</dbReference>
<dbReference type="PANTHER" id="PTHR30511">
    <property type="entry name" value="ALANINE RACEMASE"/>
    <property type="match status" value="1"/>
</dbReference>
<dbReference type="PANTHER" id="PTHR30511:SF0">
    <property type="entry name" value="ALANINE RACEMASE, CATABOLIC-RELATED"/>
    <property type="match status" value="1"/>
</dbReference>
<dbReference type="Pfam" id="PF00842">
    <property type="entry name" value="Ala_racemase_C"/>
    <property type="match status" value="1"/>
</dbReference>
<dbReference type="Pfam" id="PF01168">
    <property type="entry name" value="Ala_racemase_N"/>
    <property type="match status" value="1"/>
</dbReference>
<dbReference type="PRINTS" id="PR00992">
    <property type="entry name" value="ALARACEMASE"/>
</dbReference>
<dbReference type="SMART" id="SM01005">
    <property type="entry name" value="Ala_racemase_C"/>
    <property type="match status" value="1"/>
</dbReference>
<dbReference type="SUPFAM" id="SSF50621">
    <property type="entry name" value="Alanine racemase C-terminal domain-like"/>
    <property type="match status" value="1"/>
</dbReference>
<dbReference type="SUPFAM" id="SSF51419">
    <property type="entry name" value="PLP-binding barrel"/>
    <property type="match status" value="1"/>
</dbReference>
<dbReference type="PROSITE" id="PS00395">
    <property type="entry name" value="ALANINE_RACEMASE"/>
    <property type="match status" value="1"/>
</dbReference>
<sequence length="357" mass="39190">MRPARALIDLQALRHNYQLAREHRGGKALAVIKADAYGHGAVRVAQALEAQADGFAVACIEEALELRAAGIRAPVLLLEGFFEADELALIVEHNFWTVVHSTWQLEAIEQAQLAKPLTVWLKIDTGMHRVGLYPHEYQAAYQRLLVTGKVARIVLMSHFARADELNSGCSDEQFAVFESFRKGLAAEISLKNSPAVLGWPHIPSDWSRPGIMLYGATPFGQAHPLADRLQPVMTLESKIISVRELPAGEAVGYGATFVCDRPLRIGVVAMGYADGYPRHAPTGTPVQIDGQPSRLLGRVSMDMLCVDLTGVPQAGLGSRVELWGKHVLASEVATRAETIPYEIFCNLRRVPRIYSQD</sequence>
<proteinExistence type="inferred from homology"/>
<protein>
    <recommendedName>
        <fullName evidence="1">Alanine racemase</fullName>
        <ecNumber evidence="1">5.1.1.1</ecNumber>
    </recommendedName>
</protein>
<name>ALR_PSE14</name>
<keyword id="KW-0413">Isomerase</keyword>
<keyword id="KW-0663">Pyridoxal phosphate</keyword>
<gene>
    <name type="primary">alr</name>
    <name type="ordered locus">PSPPH_0225</name>
</gene>
<reference key="1">
    <citation type="journal article" date="2005" name="J. Bacteriol.">
        <title>Whole-genome sequence analysis of Pseudomonas syringae pv. phaseolicola 1448A reveals divergence among pathovars in genes involved in virulence and transposition.</title>
        <authorList>
            <person name="Joardar V."/>
            <person name="Lindeberg M."/>
            <person name="Jackson R.W."/>
            <person name="Selengut J."/>
            <person name="Dodson R."/>
            <person name="Brinkac L.M."/>
            <person name="Daugherty S.C."/>
            <person name="DeBoy R.T."/>
            <person name="Durkin A.S."/>
            <person name="Gwinn Giglio M."/>
            <person name="Madupu R."/>
            <person name="Nelson W.C."/>
            <person name="Rosovitz M.J."/>
            <person name="Sullivan S.A."/>
            <person name="Crabtree J."/>
            <person name="Creasy T."/>
            <person name="Davidsen T.M."/>
            <person name="Haft D.H."/>
            <person name="Zafar N."/>
            <person name="Zhou L."/>
            <person name="Halpin R."/>
            <person name="Holley T."/>
            <person name="Khouri H.M."/>
            <person name="Feldblyum T.V."/>
            <person name="White O."/>
            <person name="Fraser C.M."/>
            <person name="Chatterjee A.K."/>
            <person name="Cartinhour S."/>
            <person name="Schneider D."/>
            <person name="Mansfield J.W."/>
            <person name="Collmer A."/>
            <person name="Buell R."/>
        </authorList>
    </citation>
    <scope>NUCLEOTIDE SEQUENCE [LARGE SCALE GENOMIC DNA]</scope>
    <source>
        <strain>1448A / Race 6</strain>
    </source>
</reference>
<accession>Q48PY9</accession>
<evidence type="ECO:0000255" key="1">
    <source>
        <dbReference type="HAMAP-Rule" id="MF_01201"/>
    </source>
</evidence>
<organism>
    <name type="scientific">Pseudomonas savastanoi pv. phaseolicola (strain 1448A / Race 6)</name>
    <name type="common">Pseudomonas syringae pv. phaseolicola (strain 1448A / Race 6)</name>
    <dbReference type="NCBI Taxonomy" id="264730"/>
    <lineage>
        <taxon>Bacteria</taxon>
        <taxon>Pseudomonadati</taxon>
        <taxon>Pseudomonadota</taxon>
        <taxon>Gammaproteobacteria</taxon>
        <taxon>Pseudomonadales</taxon>
        <taxon>Pseudomonadaceae</taxon>
        <taxon>Pseudomonas</taxon>
    </lineage>
</organism>
<feature type="chain" id="PRO_1000066026" description="Alanine racemase">
    <location>
        <begin position="1"/>
        <end position="357"/>
    </location>
</feature>
<feature type="active site" description="Proton acceptor; specific for D-alanine" evidence="1">
    <location>
        <position position="33"/>
    </location>
</feature>
<feature type="active site" description="Proton acceptor; specific for L-alanine" evidence="1">
    <location>
        <position position="253"/>
    </location>
</feature>
<feature type="binding site" evidence="1">
    <location>
        <position position="129"/>
    </location>
    <ligand>
        <name>substrate</name>
    </ligand>
</feature>
<feature type="binding site" evidence="1">
    <location>
        <position position="301"/>
    </location>
    <ligand>
        <name>substrate</name>
    </ligand>
</feature>
<feature type="modified residue" description="N6-(pyridoxal phosphate)lysine" evidence="1">
    <location>
        <position position="33"/>
    </location>
</feature>
<comment type="function">
    <text evidence="1">Catalyzes the interconversion of L-alanine and D-alanine. May also act on other amino acids.</text>
</comment>
<comment type="catalytic activity">
    <reaction evidence="1">
        <text>L-alanine = D-alanine</text>
        <dbReference type="Rhea" id="RHEA:20249"/>
        <dbReference type="ChEBI" id="CHEBI:57416"/>
        <dbReference type="ChEBI" id="CHEBI:57972"/>
        <dbReference type="EC" id="5.1.1.1"/>
    </reaction>
</comment>
<comment type="cofactor">
    <cofactor evidence="1">
        <name>pyridoxal 5'-phosphate</name>
        <dbReference type="ChEBI" id="CHEBI:597326"/>
    </cofactor>
</comment>
<comment type="pathway">
    <text evidence="1">Amino-acid biosynthesis; D-alanine biosynthesis; D-alanine from L-alanine: step 1/1.</text>
</comment>
<comment type="similarity">
    <text evidence="1">Belongs to the alanine racemase family.</text>
</comment>